<gene>
    <name evidence="1" type="primary">cutC</name>
    <name type="ordered locus">HSM_0457</name>
</gene>
<keyword id="KW-0963">Cytoplasm</keyword>
<feature type="chain" id="PRO_1000083679" description="PF03932 family protein CutC">
    <location>
        <begin position="1"/>
        <end position="243"/>
    </location>
</feature>
<reference key="1">
    <citation type="submission" date="2008-02" db="EMBL/GenBank/DDBJ databases">
        <title>Complete sequence of Haemophilus somnus 2336.</title>
        <authorList>
            <consortium name="US DOE Joint Genome Institute"/>
            <person name="Siddaramappa S."/>
            <person name="Duncan A.J."/>
            <person name="Challacombe J.F."/>
            <person name="Rainey D."/>
            <person name="Gillaspy A.F."/>
            <person name="Carson M."/>
            <person name="Gipson J."/>
            <person name="Gipson M."/>
            <person name="Bruce D."/>
            <person name="Detter J.C."/>
            <person name="Han C.S."/>
            <person name="Land M."/>
            <person name="Tapia R."/>
            <person name="Thompson L.S."/>
            <person name="Orvis J."/>
            <person name="Zaitshik J."/>
            <person name="Barnes G."/>
            <person name="Brettin T.S."/>
            <person name="Dyer D.W."/>
            <person name="Inzana T.J."/>
        </authorList>
    </citation>
    <scope>NUCLEOTIDE SEQUENCE [LARGE SCALE GENOMIC DNA]</scope>
    <source>
        <strain>2336</strain>
    </source>
</reference>
<protein>
    <recommendedName>
        <fullName evidence="1">PF03932 family protein CutC</fullName>
    </recommendedName>
</protein>
<comment type="subcellular location">
    <subcellularLocation>
        <location evidence="1">Cytoplasm</location>
    </subcellularLocation>
</comment>
<comment type="similarity">
    <text evidence="1">Belongs to the CutC family.</text>
</comment>
<comment type="caution">
    <text evidence="1">Once thought to be involved in copper homeostasis, experiments in E.coli have shown this is not the case.</text>
</comment>
<sequence length="243" mass="26695">MDIEICIDNIESALIAQNSGADRLEVCGCLALGGVTPPYSLIKTVLDVCNIPCYVMIRPRSGDFLFNAHEIKMMEQDIHIAKQLGAQGVVIGALTENGEIDLSICHRLISAAEGLGVTFHRAFDLCSDPYHGLEQLIELGCERVLTSGQQRTAFEGRYVLKTLVQQAKGRIKIMAGAGVNPNNALELVKISKVDELHLSAKTFRQSSMKGNSSVTMGNKAEDDYKIWTTDRNQIIAIKKLFQE</sequence>
<dbReference type="EMBL" id="CP000947">
    <property type="protein sequence ID" value="ACA32101.1"/>
    <property type="molecule type" value="Genomic_DNA"/>
</dbReference>
<dbReference type="RefSeq" id="WP_012341295.1">
    <property type="nucleotide sequence ID" value="NC_010519.1"/>
</dbReference>
<dbReference type="SMR" id="B0URL9"/>
<dbReference type="STRING" id="228400.HSM_0457"/>
<dbReference type="GeneID" id="31486740"/>
<dbReference type="KEGG" id="hsm:HSM_0457"/>
<dbReference type="HOGENOM" id="CLU_050555_3_1_6"/>
<dbReference type="GO" id="GO:0005737">
    <property type="term" value="C:cytoplasm"/>
    <property type="evidence" value="ECO:0007669"/>
    <property type="project" value="UniProtKB-SubCell"/>
</dbReference>
<dbReference type="GO" id="GO:0005507">
    <property type="term" value="F:copper ion binding"/>
    <property type="evidence" value="ECO:0007669"/>
    <property type="project" value="TreeGrafter"/>
</dbReference>
<dbReference type="FunFam" id="3.20.20.380:FF:000001">
    <property type="entry name" value="Copper homeostasis protein CutC"/>
    <property type="match status" value="1"/>
</dbReference>
<dbReference type="Gene3D" id="3.20.20.380">
    <property type="entry name" value="Copper homeostasis (CutC) domain"/>
    <property type="match status" value="1"/>
</dbReference>
<dbReference type="HAMAP" id="MF_00795">
    <property type="entry name" value="CutC"/>
    <property type="match status" value="1"/>
</dbReference>
<dbReference type="InterPro" id="IPR005627">
    <property type="entry name" value="CutC-like"/>
</dbReference>
<dbReference type="InterPro" id="IPR036822">
    <property type="entry name" value="CutC-like_dom_sf"/>
</dbReference>
<dbReference type="PANTHER" id="PTHR12598">
    <property type="entry name" value="COPPER HOMEOSTASIS PROTEIN CUTC"/>
    <property type="match status" value="1"/>
</dbReference>
<dbReference type="PANTHER" id="PTHR12598:SF0">
    <property type="entry name" value="COPPER HOMEOSTASIS PROTEIN CUTC HOMOLOG"/>
    <property type="match status" value="1"/>
</dbReference>
<dbReference type="Pfam" id="PF03932">
    <property type="entry name" value="CutC"/>
    <property type="match status" value="1"/>
</dbReference>
<dbReference type="SUPFAM" id="SSF110395">
    <property type="entry name" value="CutC-like"/>
    <property type="match status" value="1"/>
</dbReference>
<evidence type="ECO:0000255" key="1">
    <source>
        <dbReference type="HAMAP-Rule" id="MF_00795"/>
    </source>
</evidence>
<accession>B0URL9</accession>
<organism>
    <name type="scientific">Histophilus somni (strain 2336)</name>
    <name type="common">Haemophilus somnus</name>
    <dbReference type="NCBI Taxonomy" id="228400"/>
    <lineage>
        <taxon>Bacteria</taxon>
        <taxon>Pseudomonadati</taxon>
        <taxon>Pseudomonadota</taxon>
        <taxon>Gammaproteobacteria</taxon>
        <taxon>Pasteurellales</taxon>
        <taxon>Pasteurellaceae</taxon>
        <taxon>Histophilus</taxon>
    </lineage>
</organism>
<proteinExistence type="inferred from homology"/>
<name>CUTC_HISS2</name>